<evidence type="ECO:0000250" key="1">
    <source>
        <dbReference type="UniProtKB" id="O14520"/>
    </source>
</evidence>
<evidence type="ECO:0000250" key="2">
    <source>
        <dbReference type="UniProtKB" id="P47862"/>
    </source>
</evidence>
<evidence type="ECO:0000250" key="3">
    <source>
        <dbReference type="UniProtKB" id="Q8R2N1"/>
    </source>
</evidence>
<evidence type="ECO:0000250" key="4">
    <source>
        <dbReference type="UniProtKB" id="Q92482"/>
    </source>
</evidence>
<evidence type="ECO:0000255" key="5"/>
<evidence type="ECO:0000305" key="6"/>
<name>AQP3_BOVIN</name>
<dbReference type="EMBL" id="BC123791">
    <property type="protein sequence ID" value="AAI23792.1"/>
    <property type="molecule type" value="mRNA"/>
</dbReference>
<dbReference type="RefSeq" id="NP_001073262.1">
    <property type="nucleotide sequence ID" value="NM_001079794.1"/>
</dbReference>
<dbReference type="SMR" id="Q08DE6"/>
<dbReference type="FunCoup" id="Q08DE6">
    <property type="interactions" value="34"/>
</dbReference>
<dbReference type="STRING" id="9913.ENSBTAP00000011196"/>
<dbReference type="GlyCosmos" id="Q08DE6">
    <property type="glycosylation" value="1 site, No reported glycans"/>
</dbReference>
<dbReference type="GlyGen" id="Q08DE6">
    <property type="glycosylation" value="1 site"/>
</dbReference>
<dbReference type="PaxDb" id="9913-ENSBTAP00000011196"/>
<dbReference type="Ensembl" id="ENSBTAT00000011196.6">
    <property type="protein sequence ID" value="ENSBTAP00000011196.4"/>
    <property type="gene ID" value="ENSBTAG00000008493.6"/>
</dbReference>
<dbReference type="GeneID" id="780866"/>
<dbReference type="KEGG" id="bta:780866"/>
<dbReference type="CTD" id="360"/>
<dbReference type="VEuPathDB" id="HostDB:ENSBTAG00000008493"/>
<dbReference type="VGNC" id="VGNC:56935">
    <property type="gene designation" value="AQP3"/>
</dbReference>
<dbReference type="eggNOG" id="KOG0224">
    <property type="taxonomic scope" value="Eukaryota"/>
</dbReference>
<dbReference type="GeneTree" id="ENSGT00940000157242"/>
<dbReference type="HOGENOM" id="CLU_020019_9_1_1"/>
<dbReference type="InParanoid" id="Q08DE6"/>
<dbReference type="OMA" id="FTSHHYY"/>
<dbReference type="OrthoDB" id="3222at2759"/>
<dbReference type="TreeFam" id="TF313173"/>
<dbReference type="Reactome" id="R-BTA-432040">
    <property type="pathway name" value="Vasopressin regulates renal water homeostasis via Aquaporins"/>
</dbReference>
<dbReference type="Reactome" id="R-BTA-432047">
    <property type="pathway name" value="Passive transport by Aquaporins"/>
</dbReference>
<dbReference type="Proteomes" id="UP000009136">
    <property type="component" value="Chromosome 8"/>
</dbReference>
<dbReference type="Bgee" id="ENSBTAG00000008493">
    <property type="expression patterns" value="Expressed in surface of tongue and 92 other cell types or tissues"/>
</dbReference>
<dbReference type="GO" id="GO:0016323">
    <property type="term" value="C:basolateral plasma membrane"/>
    <property type="evidence" value="ECO:0000250"/>
    <property type="project" value="UniProtKB"/>
</dbReference>
<dbReference type="GO" id="GO:0005911">
    <property type="term" value="C:cell-cell junction"/>
    <property type="evidence" value="ECO:0007669"/>
    <property type="project" value="Ensembl"/>
</dbReference>
<dbReference type="GO" id="GO:0005737">
    <property type="term" value="C:cytoplasm"/>
    <property type="evidence" value="ECO:0007669"/>
    <property type="project" value="Ensembl"/>
</dbReference>
<dbReference type="GO" id="GO:0005654">
    <property type="term" value="C:nucleoplasm"/>
    <property type="evidence" value="ECO:0007669"/>
    <property type="project" value="Ensembl"/>
</dbReference>
<dbReference type="GO" id="GO:0005886">
    <property type="term" value="C:plasma membrane"/>
    <property type="evidence" value="ECO:0000318"/>
    <property type="project" value="GO_Central"/>
</dbReference>
<dbReference type="GO" id="GO:0015254">
    <property type="term" value="F:glycerol channel activity"/>
    <property type="evidence" value="ECO:0000250"/>
    <property type="project" value="UniProtKB"/>
</dbReference>
<dbReference type="GO" id="GO:0042802">
    <property type="term" value="F:identical protein binding"/>
    <property type="evidence" value="ECO:0007669"/>
    <property type="project" value="Ensembl"/>
</dbReference>
<dbReference type="GO" id="GO:0015166">
    <property type="term" value="F:polyol transmembrane transporter activity"/>
    <property type="evidence" value="ECO:0000250"/>
    <property type="project" value="UniProtKB"/>
</dbReference>
<dbReference type="GO" id="GO:0015250">
    <property type="term" value="F:water channel activity"/>
    <property type="evidence" value="ECO:0000250"/>
    <property type="project" value="UniProtKB"/>
</dbReference>
<dbReference type="GO" id="GO:0071456">
    <property type="term" value="P:cellular response to hypoxia"/>
    <property type="evidence" value="ECO:0007669"/>
    <property type="project" value="Ensembl"/>
</dbReference>
<dbReference type="GO" id="GO:0051649">
    <property type="term" value="P:establishment of localization in cell"/>
    <property type="evidence" value="ECO:0007669"/>
    <property type="project" value="Ensembl"/>
</dbReference>
<dbReference type="GO" id="GO:0015793">
    <property type="term" value="P:glycerol transmembrane transport"/>
    <property type="evidence" value="ECO:0000250"/>
    <property type="project" value="UniProtKB"/>
</dbReference>
<dbReference type="GO" id="GO:0042476">
    <property type="term" value="P:odontogenesis"/>
    <property type="evidence" value="ECO:0007669"/>
    <property type="project" value="Ensembl"/>
</dbReference>
<dbReference type="GO" id="GO:0015791">
    <property type="term" value="P:polyol transmembrane transport"/>
    <property type="evidence" value="ECO:0000250"/>
    <property type="project" value="UniProtKB"/>
</dbReference>
<dbReference type="GO" id="GO:0002684">
    <property type="term" value="P:positive regulation of immune system process"/>
    <property type="evidence" value="ECO:0007669"/>
    <property type="project" value="Ensembl"/>
</dbReference>
<dbReference type="GO" id="GO:0070295">
    <property type="term" value="P:renal water absorption"/>
    <property type="evidence" value="ECO:0007669"/>
    <property type="project" value="Ensembl"/>
</dbReference>
<dbReference type="GO" id="GO:0002931">
    <property type="term" value="P:response to ischemia"/>
    <property type="evidence" value="ECO:0007669"/>
    <property type="project" value="Ensembl"/>
</dbReference>
<dbReference type="GO" id="GO:0032526">
    <property type="term" value="P:response to retinoic acid"/>
    <property type="evidence" value="ECO:0007669"/>
    <property type="project" value="Ensembl"/>
</dbReference>
<dbReference type="GO" id="GO:0015840">
    <property type="term" value="P:urea transport"/>
    <property type="evidence" value="ECO:0007669"/>
    <property type="project" value="Ensembl"/>
</dbReference>
<dbReference type="GO" id="GO:0006833">
    <property type="term" value="P:water transport"/>
    <property type="evidence" value="ECO:0000250"/>
    <property type="project" value="UniProtKB"/>
</dbReference>
<dbReference type="CDD" id="cd00333">
    <property type="entry name" value="MIP"/>
    <property type="match status" value="1"/>
</dbReference>
<dbReference type="FunFam" id="1.20.1080.10:FF:000005">
    <property type="entry name" value="Aquaporin 3"/>
    <property type="match status" value="1"/>
</dbReference>
<dbReference type="Gene3D" id="1.20.1080.10">
    <property type="entry name" value="Glycerol uptake facilitator protein"/>
    <property type="match status" value="1"/>
</dbReference>
<dbReference type="InterPro" id="IPR023271">
    <property type="entry name" value="Aquaporin-like"/>
</dbReference>
<dbReference type="InterPro" id="IPR023275">
    <property type="entry name" value="Aquaporin_3"/>
</dbReference>
<dbReference type="InterPro" id="IPR000425">
    <property type="entry name" value="MIP"/>
</dbReference>
<dbReference type="InterPro" id="IPR050363">
    <property type="entry name" value="MIP/Aquaporin"/>
</dbReference>
<dbReference type="InterPro" id="IPR022357">
    <property type="entry name" value="MIP_CS"/>
</dbReference>
<dbReference type="NCBIfam" id="TIGR00861">
    <property type="entry name" value="MIP"/>
    <property type="match status" value="1"/>
</dbReference>
<dbReference type="PANTHER" id="PTHR43829">
    <property type="entry name" value="AQUAPORIN OR AQUAGLYCEROPORIN RELATED"/>
    <property type="match status" value="1"/>
</dbReference>
<dbReference type="PANTHER" id="PTHR43829:SF7">
    <property type="entry name" value="AQUAPORIN-3"/>
    <property type="match status" value="1"/>
</dbReference>
<dbReference type="Pfam" id="PF00230">
    <property type="entry name" value="MIP"/>
    <property type="match status" value="1"/>
</dbReference>
<dbReference type="PRINTS" id="PR02015">
    <property type="entry name" value="AQUAPORIN3"/>
</dbReference>
<dbReference type="PRINTS" id="PR00783">
    <property type="entry name" value="MINTRINSICP"/>
</dbReference>
<dbReference type="SUPFAM" id="SSF81338">
    <property type="entry name" value="Aquaporin-like"/>
    <property type="match status" value="1"/>
</dbReference>
<dbReference type="PROSITE" id="PS00221">
    <property type="entry name" value="MIP"/>
    <property type="match status" value="1"/>
</dbReference>
<organism>
    <name type="scientific">Bos taurus</name>
    <name type="common">Bovine</name>
    <dbReference type="NCBI Taxonomy" id="9913"/>
    <lineage>
        <taxon>Eukaryota</taxon>
        <taxon>Metazoa</taxon>
        <taxon>Chordata</taxon>
        <taxon>Craniata</taxon>
        <taxon>Vertebrata</taxon>
        <taxon>Euteleostomi</taxon>
        <taxon>Mammalia</taxon>
        <taxon>Eutheria</taxon>
        <taxon>Laurasiatheria</taxon>
        <taxon>Artiodactyla</taxon>
        <taxon>Ruminantia</taxon>
        <taxon>Pecora</taxon>
        <taxon>Bovidae</taxon>
        <taxon>Bovinae</taxon>
        <taxon>Bos</taxon>
    </lineage>
</organism>
<feature type="chain" id="PRO_0000282885" description="Aquaporin-3">
    <location>
        <begin position="1"/>
        <end position="292"/>
    </location>
</feature>
<feature type="topological domain" description="Cytoplasmic" evidence="1">
    <location>
        <begin position="1"/>
        <end position="24"/>
    </location>
</feature>
<feature type="transmembrane region" description="Helical; Name=1" evidence="1">
    <location>
        <begin position="25"/>
        <end position="42"/>
    </location>
</feature>
<feature type="topological domain" description="Extracellular" evidence="1">
    <location>
        <begin position="43"/>
        <end position="56"/>
    </location>
</feature>
<feature type="transmembrane region" description="Helical; Name=2" evidence="1">
    <location>
        <begin position="57"/>
        <end position="74"/>
    </location>
</feature>
<feature type="topological domain" description="Cytoplasmic" evidence="1">
    <location>
        <begin position="75"/>
        <end position="78"/>
    </location>
</feature>
<feature type="intramembrane region" description="Discontinuously helical" evidence="1">
    <location>
        <begin position="79"/>
        <end position="92"/>
    </location>
</feature>
<feature type="topological domain" description="Cytoplasmic" evidence="1">
    <location>
        <begin position="93"/>
        <end position="100"/>
    </location>
</feature>
<feature type="transmembrane region" description="Helical; Name=3" evidence="1">
    <location>
        <begin position="101"/>
        <end position="121"/>
    </location>
</feature>
<feature type="topological domain" description="Extracellular" evidence="1">
    <location>
        <begin position="122"/>
        <end position="159"/>
    </location>
</feature>
<feature type="transmembrane region" description="Helical; Name=4" evidence="1">
    <location>
        <begin position="160"/>
        <end position="177"/>
    </location>
</feature>
<feature type="topological domain" description="Cytoplasmic" evidence="1">
    <location>
        <begin position="178"/>
        <end position="189"/>
    </location>
</feature>
<feature type="transmembrane region" description="Helical; Name=5" evidence="1">
    <location>
        <begin position="190"/>
        <end position="206"/>
    </location>
</feature>
<feature type="topological domain" description="Extracellular" evidence="1">
    <location>
        <begin position="207"/>
        <end position="210"/>
    </location>
</feature>
<feature type="intramembrane region" description="Discontinuously helical" evidence="1">
    <location>
        <begin position="211"/>
        <end position="224"/>
    </location>
</feature>
<feature type="topological domain" description="Extracellular" evidence="1">
    <location>
        <begin position="225"/>
        <end position="242"/>
    </location>
</feature>
<feature type="transmembrane region" description="Helical; Name=6" evidence="1">
    <location>
        <begin position="243"/>
        <end position="264"/>
    </location>
</feature>
<feature type="topological domain" description="Cytoplasmic" evidence="1">
    <location>
        <begin position="265"/>
        <end position="292"/>
    </location>
</feature>
<feature type="short sequence motif" description="NPA 1" evidence="1">
    <location>
        <begin position="83"/>
        <end position="85"/>
    </location>
</feature>
<feature type="short sequence motif" description="NPA 2" evidence="1">
    <location>
        <begin position="215"/>
        <end position="217"/>
    </location>
</feature>
<feature type="site" description="Selectivity filter" evidence="1">
    <location>
        <position position="63"/>
    </location>
</feature>
<feature type="site" description="Selectivity filter" evidence="1">
    <location>
        <position position="212"/>
    </location>
</feature>
<feature type="site" description="Selectivity filter" evidence="1">
    <location>
        <position position="218"/>
    </location>
</feature>
<feature type="glycosylation site" description="N-linked (GlcNAc...) asparagine" evidence="5">
    <location>
        <position position="141"/>
    </location>
</feature>
<keyword id="KW-1003">Cell membrane</keyword>
<keyword id="KW-0325">Glycoprotein</keyword>
<keyword id="KW-0472">Membrane</keyword>
<keyword id="KW-1185">Reference proteome</keyword>
<keyword id="KW-0677">Repeat</keyword>
<keyword id="KW-0812">Transmembrane</keyword>
<keyword id="KW-1133">Transmembrane helix</keyword>
<keyword id="KW-0813">Transport</keyword>
<reference key="1">
    <citation type="submission" date="2006-09" db="EMBL/GenBank/DDBJ databases">
        <authorList>
            <consortium name="NIH - Mammalian Gene Collection (MGC) project"/>
        </authorList>
    </citation>
    <scope>NUCLEOTIDE SEQUENCE [LARGE SCALE MRNA]</scope>
    <source>
        <strain>Hereford</strain>
        <tissue>Fetal skin</tissue>
    </source>
</reference>
<gene>
    <name evidence="4" type="primary">AQP3</name>
</gene>
<sequence>MGRQKELVNRCGEMLHIRYRLLRQALAECLGTLILVMFGCGSVAQVVLSRGTHGGFLTINLAFGFAVTLGILIAGQVSGAHLNPAVTFAMCFLAREPWIKLPVYTLAQTLGAFLGAGIIFGLYYDAIWAFANNQLIVSGPNGTAGIFATYPSGHLDMVNGFFDQFIGTASLIVCVLAIVDPYNNPVPRGLEAFTVGLVVLVIGTSMGFNSGYAVNPARDFGPRLFTAIAGWGSEVFTTGRHWWWVPIVSPLLGSIAGVFVYQLMIGCHLEPPPPSTDEENVKLSHVKHKEQM</sequence>
<comment type="function">
    <text evidence="2 3 4">Aquaglyceroporins form homotetrameric transmembrane channels, with each monomer independently mediating glycerol and water transport across the plasma membrane along their osmotic gradient (By similarity). Could also be permeable to urea (By similarity). Also participates in cell permeability to H2O2 and H2O2-mediated signaling (By similarity). In skin, transports glycerol to the epidermis and stratum corneum, where it maintains hydration, elasticity, and supports lipid biosynthesis for barrier repair. In kidney, contributes to the reabsorption of water, helping the body maintain proper fluid balance (By similarity).</text>
</comment>
<comment type="catalytic activity">
    <reaction evidence="4">
        <text>glycerol(in) = glycerol(out)</text>
        <dbReference type="Rhea" id="RHEA:29675"/>
        <dbReference type="ChEBI" id="CHEBI:17754"/>
    </reaction>
</comment>
<comment type="catalytic activity">
    <reaction evidence="4">
        <text>H2O(in) = H2O(out)</text>
        <dbReference type="Rhea" id="RHEA:29667"/>
        <dbReference type="ChEBI" id="CHEBI:15377"/>
    </reaction>
</comment>
<comment type="catalytic activity">
    <reaction evidence="2">
        <text>urea(in) = urea(out)</text>
        <dbReference type="Rhea" id="RHEA:32799"/>
        <dbReference type="ChEBI" id="CHEBI:16199"/>
    </reaction>
</comment>
<comment type="catalytic activity">
    <reaction evidence="4">
        <text>H2O2(out) = H2O2(in)</text>
        <dbReference type="Rhea" id="RHEA:74375"/>
        <dbReference type="ChEBI" id="CHEBI:16240"/>
    </reaction>
</comment>
<comment type="subunit">
    <text evidence="1 4">Homotetramer; each monomer provides an independent glycerol/water pore (By similarity). Could also exist in other oligomeric states (By similarity).</text>
</comment>
<comment type="subcellular location">
    <subcellularLocation>
        <location evidence="4">Cell membrane</location>
        <topology evidence="1">Multi-pass membrane protein</topology>
    </subcellularLocation>
    <subcellularLocation>
        <location evidence="2">Basolateral cell membrane</location>
        <topology evidence="1">Multi-pass membrane protein</topology>
    </subcellularLocation>
</comment>
<comment type="domain">
    <text evidence="1">Aquaporins contain two tandem repeats each containing three membrane-spanning domains and a pore-forming loop with the signature motif Asn-Pro-Ala (NPA).</text>
</comment>
<comment type="similarity">
    <text evidence="6">Belongs to the MIP/aquaporin (TC 1.A.8) family.</text>
</comment>
<accession>Q08DE6</accession>
<protein>
    <recommendedName>
        <fullName>Aquaporin-3</fullName>
        <shortName>AQP-3</shortName>
    </recommendedName>
    <alternativeName>
        <fullName>Aquaglyceroporin-3</fullName>
    </alternativeName>
</protein>
<proteinExistence type="evidence at transcript level"/>